<keyword id="KW-0997">Cell inner membrane</keyword>
<keyword id="KW-1003">Cell membrane</keyword>
<keyword id="KW-0472">Membrane</keyword>
<keyword id="KW-1185">Reference proteome</keyword>
<keyword id="KW-0812">Transmembrane</keyword>
<keyword id="KW-1133">Transmembrane helix</keyword>
<keyword id="KW-0813">Transport</keyword>
<feature type="chain" id="PRO_0000290130" description="sn-glycerol-3-phosphate transport system permease protein UgpA">
    <location>
        <begin position="1"/>
        <end position="293"/>
    </location>
</feature>
<feature type="transmembrane region" description="Helical" evidence="3">
    <location>
        <begin position="10"/>
        <end position="30"/>
    </location>
</feature>
<feature type="transmembrane region" description="Helical" evidence="3">
    <location>
        <begin position="72"/>
        <end position="92"/>
    </location>
</feature>
<feature type="transmembrane region" description="Helical" evidence="3">
    <location>
        <begin position="108"/>
        <end position="128"/>
    </location>
</feature>
<feature type="transmembrane region" description="Helical" evidence="3">
    <location>
        <begin position="156"/>
        <end position="176"/>
    </location>
</feature>
<feature type="transmembrane region" description="Helical" evidence="3">
    <location>
        <begin position="204"/>
        <end position="224"/>
    </location>
</feature>
<feature type="transmembrane region" description="Helical" evidence="3">
    <location>
        <begin position="261"/>
        <end position="281"/>
    </location>
</feature>
<feature type="domain" description="ABC transmembrane type-1" evidence="3">
    <location>
        <begin position="66"/>
        <end position="282"/>
    </location>
</feature>
<proteinExistence type="inferred from homology"/>
<dbReference type="EMBL" id="AE007870">
    <property type="protein sequence ID" value="AAK90200.2"/>
    <property type="molecule type" value="Genomic_DNA"/>
</dbReference>
<dbReference type="PIR" id="AD2948">
    <property type="entry name" value="AD2948"/>
</dbReference>
<dbReference type="PIR" id="F98334">
    <property type="entry name" value="F98334"/>
</dbReference>
<dbReference type="RefSeq" id="NP_357415.2">
    <property type="nucleotide sequence ID" value="NC_003063.2"/>
</dbReference>
<dbReference type="RefSeq" id="WP_010972830.1">
    <property type="nucleotide sequence ID" value="NC_003063.2"/>
</dbReference>
<dbReference type="SMR" id="Q7CRU3"/>
<dbReference type="STRING" id="176299.Atu3186"/>
<dbReference type="EnsemblBacteria" id="AAK90200">
    <property type="protein sequence ID" value="AAK90200"/>
    <property type="gene ID" value="Atu3186"/>
</dbReference>
<dbReference type="GeneID" id="1134988"/>
<dbReference type="KEGG" id="atu:Atu3186"/>
<dbReference type="PATRIC" id="fig|176299.10.peg.3031"/>
<dbReference type="eggNOG" id="COG1175">
    <property type="taxonomic scope" value="Bacteria"/>
</dbReference>
<dbReference type="HOGENOM" id="CLU_016047_0_2_5"/>
<dbReference type="OrthoDB" id="9773727at2"/>
<dbReference type="PhylomeDB" id="Q7CRU3"/>
<dbReference type="BioCyc" id="AGRO:ATU3186-MONOMER"/>
<dbReference type="Proteomes" id="UP000000813">
    <property type="component" value="Chromosome linear"/>
</dbReference>
<dbReference type="GO" id="GO:0005886">
    <property type="term" value="C:plasma membrane"/>
    <property type="evidence" value="ECO:0007669"/>
    <property type="project" value="UniProtKB-SubCell"/>
</dbReference>
<dbReference type="GO" id="GO:0055085">
    <property type="term" value="P:transmembrane transport"/>
    <property type="evidence" value="ECO:0007669"/>
    <property type="project" value="InterPro"/>
</dbReference>
<dbReference type="CDD" id="cd06261">
    <property type="entry name" value="TM_PBP2"/>
    <property type="match status" value="1"/>
</dbReference>
<dbReference type="Gene3D" id="1.10.3720.10">
    <property type="entry name" value="MetI-like"/>
    <property type="match status" value="1"/>
</dbReference>
<dbReference type="InterPro" id="IPR000515">
    <property type="entry name" value="MetI-like"/>
</dbReference>
<dbReference type="InterPro" id="IPR035906">
    <property type="entry name" value="MetI-like_sf"/>
</dbReference>
<dbReference type="InterPro" id="IPR050809">
    <property type="entry name" value="UgpAE/MalFG_permease"/>
</dbReference>
<dbReference type="NCBIfam" id="NF007852">
    <property type="entry name" value="PRK10561.1"/>
    <property type="match status" value="1"/>
</dbReference>
<dbReference type="PANTHER" id="PTHR43227">
    <property type="entry name" value="BLL4140 PROTEIN"/>
    <property type="match status" value="1"/>
</dbReference>
<dbReference type="PANTHER" id="PTHR43227:SF9">
    <property type="entry name" value="SN-GLYCEROL-3-PHOSPHATE TRANSPORT SYSTEM PERMEASE PROTEIN UGPA"/>
    <property type="match status" value="1"/>
</dbReference>
<dbReference type="Pfam" id="PF00528">
    <property type="entry name" value="BPD_transp_1"/>
    <property type="match status" value="1"/>
</dbReference>
<dbReference type="SUPFAM" id="SSF161098">
    <property type="entry name" value="MetI-like"/>
    <property type="match status" value="1"/>
</dbReference>
<dbReference type="PROSITE" id="PS50928">
    <property type="entry name" value="ABC_TM1"/>
    <property type="match status" value="1"/>
</dbReference>
<gene>
    <name type="primary">ugpA</name>
    <name type="ordered locus">Atu3186</name>
    <name type="ORF">AGR_L_3247</name>
</gene>
<sequence length="293" mass="32198">MQSVVFPNKILPYLLVAPQIILTVIFFFWPASQALYQSTMREDAFGLSSNFVGLANFSAVLSDESYLNSLKVTVIFSVLTALVSMGLALLLATAADRVVRGKGFYRTMMIMPYAVAPAVAGMLWLFMFNPAMGTLSYILRRNGIMWDPLLDGNQAMLLVVAAAAWKQISYNFLFFVAGLQAIPKSLLEAASIDGARGSRRFWTIVFPLLAPTTFFLLVVNTVYAFFDTFGIIHAVTGGGPAKATETLVYKVYNDGFVNLNLGSSAAQSVILMVIVIALTAFQFRFVEKRVHYG</sequence>
<reference key="1">
    <citation type="journal article" date="2001" name="Science">
        <title>The genome of the natural genetic engineer Agrobacterium tumefaciens C58.</title>
        <authorList>
            <person name="Wood D.W."/>
            <person name="Setubal J.C."/>
            <person name="Kaul R."/>
            <person name="Monks D.E."/>
            <person name="Kitajima J.P."/>
            <person name="Okura V.K."/>
            <person name="Zhou Y."/>
            <person name="Chen L."/>
            <person name="Wood G.E."/>
            <person name="Almeida N.F. Jr."/>
            <person name="Woo L."/>
            <person name="Chen Y."/>
            <person name="Paulsen I.T."/>
            <person name="Eisen J.A."/>
            <person name="Karp P.D."/>
            <person name="Bovee D. Sr."/>
            <person name="Chapman P."/>
            <person name="Clendenning J."/>
            <person name="Deatherage G."/>
            <person name="Gillet W."/>
            <person name="Grant C."/>
            <person name="Kutyavin T."/>
            <person name="Levy R."/>
            <person name="Li M.-J."/>
            <person name="McClelland E."/>
            <person name="Palmieri A."/>
            <person name="Raymond C."/>
            <person name="Rouse G."/>
            <person name="Saenphimmachak C."/>
            <person name="Wu Z."/>
            <person name="Romero P."/>
            <person name="Gordon D."/>
            <person name="Zhang S."/>
            <person name="Yoo H."/>
            <person name="Tao Y."/>
            <person name="Biddle P."/>
            <person name="Jung M."/>
            <person name="Krespan W."/>
            <person name="Perry M."/>
            <person name="Gordon-Kamm B."/>
            <person name="Liao L."/>
            <person name="Kim S."/>
            <person name="Hendrick C."/>
            <person name="Zhao Z.-Y."/>
            <person name="Dolan M."/>
            <person name="Chumley F."/>
            <person name="Tingey S.V."/>
            <person name="Tomb J.-F."/>
            <person name="Gordon M.P."/>
            <person name="Olson M.V."/>
            <person name="Nester E.W."/>
        </authorList>
    </citation>
    <scope>NUCLEOTIDE SEQUENCE [LARGE SCALE GENOMIC DNA]</scope>
    <source>
        <strain>C58 / ATCC 33970</strain>
    </source>
</reference>
<reference key="2">
    <citation type="journal article" date="2001" name="Science">
        <title>Genome sequence of the plant pathogen and biotechnology agent Agrobacterium tumefaciens C58.</title>
        <authorList>
            <person name="Goodner B."/>
            <person name="Hinkle G."/>
            <person name="Gattung S."/>
            <person name="Miller N."/>
            <person name="Blanchard M."/>
            <person name="Qurollo B."/>
            <person name="Goldman B.S."/>
            <person name="Cao Y."/>
            <person name="Askenazi M."/>
            <person name="Halling C."/>
            <person name="Mullin L."/>
            <person name="Houmiel K."/>
            <person name="Gordon J."/>
            <person name="Vaudin M."/>
            <person name="Iartchouk O."/>
            <person name="Epp A."/>
            <person name="Liu F."/>
            <person name="Wollam C."/>
            <person name="Allinger M."/>
            <person name="Doughty D."/>
            <person name="Scott C."/>
            <person name="Lappas C."/>
            <person name="Markelz B."/>
            <person name="Flanagan C."/>
            <person name="Crowell C."/>
            <person name="Gurson J."/>
            <person name="Lomo C."/>
            <person name="Sear C."/>
            <person name="Strub G."/>
            <person name="Cielo C."/>
            <person name="Slater S."/>
        </authorList>
    </citation>
    <scope>NUCLEOTIDE SEQUENCE [LARGE SCALE GENOMIC DNA]</scope>
    <source>
        <strain>C58 / ATCC 33970</strain>
    </source>
</reference>
<organism>
    <name type="scientific">Agrobacterium fabrum (strain C58 / ATCC 33970)</name>
    <name type="common">Agrobacterium tumefaciens (strain C58)</name>
    <dbReference type="NCBI Taxonomy" id="176299"/>
    <lineage>
        <taxon>Bacteria</taxon>
        <taxon>Pseudomonadati</taxon>
        <taxon>Pseudomonadota</taxon>
        <taxon>Alphaproteobacteria</taxon>
        <taxon>Hyphomicrobiales</taxon>
        <taxon>Rhizobiaceae</taxon>
        <taxon>Rhizobium/Agrobacterium group</taxon>
        <taxon>Agrobacterium</taxon>
        <taxon>Agrobacterium tumefaciens complex</taxon>
    </lineage>
</organism>
<comment type="function">
    <text evidence="1">Part of the ABC transporter complex UgpBAEC involved in sn-glycerol-3-phosphate (G3P) import. Probably responsible for the translocation of the substrate across the membrane.</text>
</comment>
<comment type="subunit">
    <text evidence="1">The complex is composed of two ATP-binding proteins (UgpC), two transmembrane proteins (UgpA and UgpE) and a solute-binding protein (UgpB).</text>
</comment>
<comment type="subcellular location">
    <subcellularLocation>
        <location evidence="1">Cell inner membrane</location>
        <topology evidence="2">Multi-pass membrane protein</topology>
    </subcellularLocation>
</comment>
<comment type="similarity">
    <text evidence="4">Belongs to the binding-protein-dependent transport system permease family.</text>
</comment>
<name>UGPA_AGRFC</name>
<accession>Q7CRU3</accession>
<accession>Q8UB31</accession>
<evidence type="ECO:0000250" key="1">
    <source>
        <dbReference type="UniProtKB" id="P10905"/>
    </source>
</evidence>
<evidence type="ECO:0000255" key="2"/>
<evidence type="ECO:0000255" key="3">
    <source>
        <dbReference type="PROSITE-ProRule" id="PRU00441"/>
    </source>
</evidence>
<evidence type="ECO:0000305" key="4"/>
<protein>
    <recommendedName>
        <fullName evidence="1">sn-glycerol-3-phosphate transport system permease protein UgpA</fullName>
    </recommendedName>
</protein>